<protein>
    <recommendedName>
        <fullName>Hemoglobin subunit beta</fullName>
    </recommendedName>
    <alternativeName>
        <fullName>Beta-globin</fullName>
    </alternativeName>
    <alternativeName>
        <fullName>Hemoglobin beta chain</fullName>
    </alternativeName>
</protein>
<evidence type="ECO:0000250" key="1">
    <source>
        <dbReference type="UniProtKB" id="P02086"/>
    </source>
</evidence>
<evidence type="ECO:0000250" key="2">
    <source>
        <dbReference type="UniProtKB" id="P68871"/>
    </source>
</evidence>
<evidence type="ECO:0000255" key="3">
    <source>
        <dbReference type="PROSITE-ProRule" id="PRU00238"/>
    </source>
</evidence>
<gene>
    <name type="primary">HBB</name>
</gene>
<accession>P68013</accession>
<accession>P07422</accession>
<organism>
    <name type="scientific">Helarctos malayanus</name>
    <name type="common">Malayan sun bear</name>
    <name type="synonym">Ursus malayanus</name>
    <dbReference type="NCBI Taxonomy" id="9634"/>
    <lineage>
        <taxon>Eukaryota</taxon>
        <taxon>Metazoa</taxon>
        <taxon>Chordata</taxon>
        <taxon>Craniata</taxon>
        <taxon>Vertebrata</taxon>
        <taxon>Euteleostomi</taxon>
        <taxon>Mammalia</taxon>
        <taxon>Eutheria</taxon>
        <taxon>Laurasiatheria</taxon>
        <taxon>Carnivora</taxon>
        <taxon>Caniformia</taxon>
        <taxon>Ursidae</taxon>
        <taxon>Helarctos</taxon>
    </lineage>
</organism>
<feature type="chain" id="PRO_0000053148" description="Hemoglobin subunit beta">
    <location>
        <begin position="1"/>
        <end position="146"/>
    </location>
</feature>
<feature type="domain" description="Globin" evidence="3">
    <location>
        <begin position="2"/>
        <end position="146"/>
    </location>
</feature>
<feature type="binding site" description="distal binding residue">
    <location>
        <position position="63"/>
    </location>
    <ligand>
        <name>heme b</name>
        <dbReference type="ChEBI" id="CHEBI:60344"/>
    </ligand>
    <ligandPart>
        <name>Fe</name>
        <dbReference type="ChEBI" id="CHEBI:18248"/>
    </ligandPart>
</feature>
<feature type="binding site" description="proximal binding residue">
    <location>
        <position position="92"/>
    </location>
    <ligand>
        <name>heme b</name>
        <dbReference type="ChEBI" id="CHEBI:60344"/>
    </ligand>
    <ligandPart>
        <name>Fe</name>
        <dbReference type="ChEBI" id="CHEBI:18248"/>
    </ligandPart>
</feature>
<feature type="modified residue" description="N-acetylvaline" evidence="1">
    <location>
        <position position="1"/>
    </location>
</feature>
<feature type="modified residue" description="Phosphothreonine" evidence="2">
    <location>
        <position position="12"/>
    </location>
</feature>
<feature type="modified residue" description="Phosphoserine" evidence="2">
    <location>
        <position position="44"/>
    </location>
</feature>
<feature type="modified residue" description="N6-acetyllysine" evidence="2">
    <location>
        <position position="59"/>
    </location>
</feature>
<feature type="modified residue" description="N6-acetyllysine" evidence="2">
    <location>
        <position position="82"/>
    </location>
</feature>
<feature type="modified residue" description="S-nitrosocysteine" evidence="2">
    <location>
        <position position="93"/>
    </location>
</feature>
<feature type="modified residue" description="N6-acetyllysine" evidence="2">
    <location>
        <position position="144"/>
    </location>
</feature>
<name>HBB_HELMA</name>
<reference key="1">
    <citation type="journal article" date="1987" name="Biol. Chem. Hoppe-Seyler">
        <title>The primary structure of the hemoglobin of Malayan sun bear (Helarctos malayanus, Carnivora) and structural comparison to other hemoglobin sequences.</title>
        <authorList>
            <person name="Hofmann O."/>
            <person name="Braunitzer G."/>
            <person name="Goltenboth R."/>
        </authorList>
    </citation>
    <scope>PROTEIN SEQUENCE</scope>
</reference>
<dbReference type="PIR" id="B26539">
    <property type="entry name" value="B26539"/>
</dbReference>
<dbReference type="SMR" id="P68013"/>
<dbReference type="GO" id="GO:0072562">
    <property type="term" value="C:blood microparticle"/>
    <property type="evidence" value="ECO:0007669"/>
    <property type="project" value="TreeGrafter"/>
</dbReference>
<dbReference type="GO" id="GO:0031838">
    <property type="term" value="C:haptoglobin-hemoglobin complex"/>
    <property type="evidence" value="ECO:0007669"/>
    <property type="project" value="TreeGrafter"/>
</dbReference>
<dbReference type="GO" id="GO:0005833">
    <property type="term" value="C:hemoglobin complex"/>
    <property type="evidence" value="ECO:0007669"/>
    <property type="project" value="InterPro"/>
</dbReference>
<dbReference type="GO" id="GO:0031720">
    <property type="term" value="F:haptoglobin binding"/>
    <property type="evidence" value="ECO:0007669"/>
    <property type="project" value="TreeGrafter"/>
</dbReference>
<dbReference type="GO" id="GO:0020037">
    <property type="term" value="F:heme binding"/>
    <property type="evidence" value="ECO:0007669"/>
    <property type="project" value="InterPro"/>
</dbReference>
<dbReference type="GO" id="GO:0031721">
    <property type="term" value="F:hemoglobin alpha binding"/>
    <property type="evidence" value="ECO:0007669"/>
    <property type="project" value="TreeGrafter"/>
</dbReference>
<dbReference type="GO" id="GO:0046872">
    <property type="term" value="F:metal ion binding"/>
    <property type="evidence" value="ECO:0007669"/>
    <property type="project" value="UniProtKB-KW"/>
</dbReference>
<dbReference type="GO" id="GO:0043177">
    <property type="term" value="F:organic acid binding"/>
    <property type="evidence" value="ECO:0007669"/>
    <property type="project" value="TreeGrafter"/>
</dbReference>
<dbReference type="GO" id="GO:0019825">
    <property type="term" value="F:oxygen binding"/>
    <property type="evidence" value="ECO:0007669"/>
    <property type="project" value="InterPro"/>
</dbReference>
<dbReference type="GO" id="GO:0005344">
    <property type="term" value="F:oxygen carrier activity"/>
    <property type="evidence" value="ECO:0007669"/>
    <property type="project" value="UniProtKB-KW"/>
</dbReference>
<dbReference type="GO" id="GO:0004601">
    <property type="term" value="F:peroxidase activity"/>
    <property type="evidence" value="ECO:0007669"/>
    <property type="project" value="TreeGrafter"/>
</dbReference>
<dbReference type="GO" id="GO:0042744">
    <property type="term" value="P:hydrogen peroxide catabolic process"/>
    <property type="evidence" value="ECO:0007669"/>
    <property type="project" value="TreeGrafter"/>
</dbReference>
<dbReference type="CDD" id="cd08925">
    <property type="entry name" value="Hb-beta-like"/>
    <property type="match status" value="1"/>
</dbReference>
<dbReference type="FunFam" id="1.10.490.10:FF:000001">
    <property type="entry name" value="Hemoglobin subunit beta"/>
    <property type="match status" value="1"/>
</dbReference>
<dbReference type="Gene3D" id="1.10.490.10">
    <property type="entry name" value="Globins"/>
    <property type="match status" value="1"/>
</dbReference>
<dbReference type="InterPro" id="IPR000971">
    <property type="entry name" value="Globin"/>
</dbReference>
<dbReference type="InterPro" id="IPR009050">
    <property type="entry name" value="Globin-like_sf"/>
</dbReference>
<dbReference type="InterPro" id="IPR012292">
    <property type="entry name" value="Globin/Proto"/>
</dbReference>
<dbReference type="InterPro" id="IPR002337">
    <property type="entry name" value="Hemoglobin_b"/>
</dbReference>
<dbReference type="InterPro" id="IPR050056">
    <property type="entry name" value="Hemoglobin_oxygen_transport"/>
</dbReference>
<dbReference type="PANTHER" id="PTHR11442">
    <property type="entry name" value="HEMOGLOBIN FAMILY MEMBER"/>
    <property type="match status" value="1"/>
</dbReference>
<dbReference type="PANTHER" id="PTHR11442:SF42">
    <property type="entry name" value="HEMOGLOBIN SUBUNIT BETA"/>
    <property type="match status" value="1"/>
</dbReference>
<dbReference type="Pfam" id="PF00042">
    <property type="entry name" value="Globin"/>
    <property type="match status" value="1"/>
</dbReference>
<dbReference type="PRINTS" id="PR00814">
    <property type="entry name" value="BETAHAEM"/>
</dbReference>
<dbReference type="SUPFAM" id="SSF46458">
    <property type="entry name" value="Globin-like"/>
    <property type="match status" value="1"/>
</dbReference>
<dbReference type="PROSITE" id="PS01033">
    <property type="entry name" value="GLOBIN"/>
    <property type="match status" value="1"/>
</dbReference>
<proteinExistence type="evidence at protein level"/>
<comment type="function">
    <text>Involved in oxygen transport from the lung to the various peripheral tissues.</text>
</comment>
<comment type="subunit">
    <text>Heterotetramer of two alpha chains and two beta chains.</text>
</comment>
<comment type="tissue specificity">
    <text>Red blood cells.</text>
</comment>
<comment type="similarity">
    <text evidence="3">Belongs to the globin family.</text>
</comment>
<keyword id="KW-0007">Acetylation</keyword>
<keyword id="KW-0903">Direct protein sequencing</keyword>
<keyword id="KW-0349">Heme</keyword>
<keyword id="KW-0408">Iron</keyword>
<keyword id="KW-0479">Metal-binding</keyword>
<keyword id="KW-0561">Oxygen transport</keyword>
<keyword id="KW-0597">Phosphoprotein</keyword>
<keyword id="KW-0702">S-nitrosylation</keyword>
<keyword id="KW-0813">Transport</keyword>
<sequence>VHLTGEEKSLVTGLWGKVNVDEVGGEALGRLLVVYPWTQRFFDSFGDLSSADAIMNNPKVKAHGKKVLNSFSDGLKNLDNLKGTFAKLSELHCDKLHVDPENFKLLGNVLVCVLAHHFGKEFTPQVQAAYQKVVAGVANALAHKYH</sequence>